<reference key="1">
    <citation type="journal article" date="2002" name="Nature">
        <title>The genome sequence of Schizosaccharomyces pombe.</title>
        <authorList>
            <person name="Wood V."/>
            <person name="Gwilliam R."/>
            <person name="Rajandream M.A."/>
            <person name="Lyne M.H."/>
            <person name="Lyne R."/>
            <person name="Stewart A."/>
            <person name="Sgouros J.G."/>
            <person name="Peat N."/>
            <person name="Hayles J."/>
            <person name="Baker S.G."/>
            <person name="Basham D."/>
            <person name="Bowman S."/>
            <person name="Brooks K."/>
            <person name="Brown D."/>
            <person name="Brown S."/>
            <person name="Chillingworth T."/>
            <person name="Churcher C.M."/>
            <person name="Collins M."/>
            <person name="Connor R."/>
            <person name="Cronin A."/>
            <person name="Davis P."/>
            <person name="Feltwell T."/>
            <person name="Fraser A."/>
            <person name="Gentles S."/>
            <person name="Goble A."/>
            <person name="Hamlin N."/>
            <person name="Harris D.E."/>
            <person name="Hidalgo J."/>
            <person name="Hodgson G."/>
            <person name="Holroyd S."/>
            <person name="Hornsby T."/>
            <person name="Howarth S."/>
            <person name="Huckle E.J."/>
            <person name="Hunt S."/>
            <person name="Jagels K."/>
            <person name="James K.D."/>
            <person name="Jones L."/>
            <person name="Jones M."/>
            <person name="Leather S."/>
            <person name="McDonald S."/>
            <person name="McLean J."/>
            <person name="Mooney P."/>
            <person name="Moule S."/>
            <person name="Mungall K.L."/>
            <person name="Murphy L.D."/>
            <person name="Niblett D."/>
            <person name="Odell C."/>
            <person name="Oliver K."/>
            <person name="O'Neil S."/>
            <person name="Pearson D."/>
            <person name="Quail M.A."/>
            <person name="Rabbinowitsch E."/>
            <person name="Rutherford K.M."/>
            <person name="Rutter S."/>
            <person name="Saunders D."/>
            <person name="Seeger K."/>
            <person name="Sharp S."/>
            <person name="Skelton J."/>
            <person name="Simmonds M.N."/>
            <person name="Squares R."/>
            <person name="Squares S."/>
            <person name="Stevens K."/>
            <person name="Taylor K."/>
            <person name="Taylor R.G."/>
            <person name="Tivey A."/>
            <person name="Walsh S.V."/>
            <person name="Warren T."/>
            <person name="Whitehead S."/>
            <person name="Woodward J.R."/>
            <person name="Volckaert G."/>
            <person name="Aert R."/>
            <person name="Robben J."/>
            <person name="Grymonprez B."/>
            <person name="Weltjens I."/>
            <person name="Vanstreels E."/>
            <person name="Rieger M."/>
            <person name="Schaefer M."/>
            <person name="Mueller-Auer S."/>
            <person name="Gabel C."/>
            <person name="Fuchs M."/>
            <person name="Duesterhoeft A."/>
            <person name="Fritzc C."/>
            <person name="Holzer E."/>
            <person name="Moestl D."/>
            <person name="Hilbert H."/>
            <person name="Borzym K."/>
            <person name="Langer I."/>
            <person name="Beck A."/>
            <person name="Lehrach H."/>
            <person name="Reinhardt R."/>
            <person name="Pohl T.M."/>
            <person name="Eger P."/>
            <person name="Zimmermann W."/>
            <person name="Wedler H."/>
            <person name="Wambutt R."/>
            <person name="Purnelle B."/>
            <person name="Goffeau A."/>
            <person name="Cadieu E."/>
            <person name="Dreano S."/>
            <person name="Gloux S."/>
            <person name="Lelaure V."/>
            <person name="Mottier S."/>
            <person name="Galibert F."/>
            <person name="Aves S.J."/>
            <person name="Xiang Z."/>
            <person name="Hunt C."/>
            <person name="Moore K."/>
            <person name="Hurst S.M."/>
            <person name="Lucas M."/>
            <person name="Rochet M."/>
            <person name="Gaillardin C."/>
            <person name="Tallada V.A."/>
            <person name="Garzon A."/>
            <person name="Thode G."/>
            <person name="Daga R.R."/>
            <person name="Cruzado L."/>
            <person name="Jimenez J."/>
            <person name="Sanchez M."/>
            <person name="del Rey F."/>
            <person name="Benito J."/>
            <person name="Dominguez A."/>
            <person name="Revuelta J.L."/>
            <person name="Moreno S."/>
            <person name="Armstrong J."/>
            <person name="Forsburg S.L."/>
            <person name="Cerutti L."/>
            <person name="Lowe T."/>
            <person name="McCombie W.R."/>
            <person name="Paulsen I."/>
            <person name="Potashkin J."/>
            <person name="Shpakovski G.V."/>
            <person name="Ussery D."/>
            <person name="Barrell B.G."/>
            <person name="Nurse P."/>
        </authorList>
    </citation>
    <scope>NUCLEOTIDE SEQUENCE [LARGE SCALE GENOMIC DNA]</scope>
    <source>
        <strain>972 / ATCC 24843</strain>
    </source>
</reference>
<name>ATP7_SCHPO</name>
<proteinExistence type="inferred from homology"/>
<keyword id="KW-0007">Acetylation</keyword>
<keyword id="KW-0066">ATP synthesis</keyword>
<keyword id="KW-0138">CF(0)</keyword>
<keyword id="KW-0375">Hydrogen ion transport</keyword>
<keyword id="KW-0406">Ion transport</keyword>
<keyword id="KW-0472">Membrane</keyword>
<keyword id="KW-0496">Mitochondrion</keyword>
<keyword id="KW-0999">Mitochondrion inner membrane</keyword>
<keyword id="KW-1185">Reference proteome</keyword>
<keyword id="KW-0813">Transport</keyword>
<accession>O94390</accession>
<evidence type="ECO:0000250" key="1"/>
<evidence type="ECO:0000305" key="2"/>
<organism>
    <name type="scientific">Schizosaccharomyces pombe (strain 972 / ATCC 24843)</name>
    <name type="common">Fission yeast</name>
    <dbReference type="NCBI Taxonomy" id="284812"/>
    <lineage>
        <taxon>Eukaryota</taxon>
        <taxon>Fungi</taxon>
        <taxon>Dikarya</taxon>
        <taxon>Ascomycota</taxon>
        <taxon>Taphrinomycotina</taxon>
        <taxon>Schizosaccharomycetes</taxon>
        <taxon>Schizosaccharomycetales</taxon>
        <taxon>Schizosaccharomycetaceae</taxon>
        <taxon>Schizosaccharomyces</taxon>
    </lineage>
</organism>
<dbReference type="EMBL" id="CU329671">
    <property type="protein sequence ID" value="CAA22441.1"/>
    <property type="molecule type" value="Genomic_DNA"/>
</dbReference>
<dbReference type="PIR" id="T40068">
    <property type="entry name" value="T40068"/>
</dbReference>
<dbReference type="RefSeq" id="NP_596058.1">
    <property type="nucleotide sequence ID" value="NM_001021969.2"/>
</dbReference>
<dbReference type="SMR" id="O94390"/>
<dbReference type="BioGRID" id="276974">
    <property type="interactions" value="2"/>
</dbReference>
<dbReference type="ComplexPortal" id="CPX-25764">
    <property type="entry name" value="Mitochondrial proton translocating ATP synthase complex"/>
</dbReference>
<dbReference type="FunCoup" id="O94390">
    <property type="interactions" value="198"/>
</dbReference>
<dbReference type="IntAct" id="O94390">
    <property type="interactions" value="2"/>
</dbReference>
<dbReference type="STRING" id="284812.O94390"/>
<dbReference type="iPTMnet" id="O94390"/>
<dbReference type="PaxDb" id="4896-SPBC29A10.13.1"/>
<dbReference type="EnsemblFungi" id="SPBC29A10.13.1">
    <property type="protein sequence ID" value="SPBC29A10.13.1:pep"/>
    <property type="gene ID" value="SPBC29A10.13"/>
</dbReference>
<dbReference type="GeneID" id="2540446"/>
<dbReference type="KEGG" id="spo:2540446"/>
<dbReference type="PomBase" id="SPBC29A10.13">
    <property type="gene designation" value="atp7"/>
</dbReference>
<dbReference type="VEuPathDB" id="FungiDB:SPBC29A10.13"/>
<dbReference type="eggNOG" id="KOG3366">
    <property type="taxonomic scope" value="Eukaryota"/>
</dbReference>
<dbReference type="HOGENOM" id="CLU_080463_0_0_1"/>
<dbReference type="InParanoid" id="O94390"/>
<dbReference type="OMA" id="VSKGRWA"/>
<dbReference type="PhylomeDB" id="O94390"/>
<dbReference type="Reactome" id="R-SPO-9837999">
    <property type="pathway name" value="Mitochondrial protein degradation"/>
</dbReference>
<dbReference type="PRO" id="PR:O94390"/>
<dbReference type="Proteomes" id="UP000002485">
    <property type="component" value="Chromosome II"/>
</dbReference>
<dbReference type="GO" id="GO:0099617">
    <property type="term" value="C:matrix side of mitochondrial inner membrane"/>
    <property type="evidence" value="ECO:0000305"/>
    <property type="project" value="PomBase"/>
</dbReference>
<dbReference type="GO" id="GO:0005739">
    <property type="term" value="C:mitochondrion"/>
    <property type="evidence" value="ECO:0007005"/>
    <property type="project" value="PomBase"/>
</dbReference>
<dbReference type="GO" id="GO:0045259">
    <property type="term" value="C:proton-transporting ATP synthase complex"/>
    <property type="evidence" value="ECO:0000250"/>
    <property type="project" value="PomBase"/>
</dbReference>
<dbReference type="GO" id="GO:0015078">
    <property type="term" value="F:proton transmembrane transporter activity"/>
    <property type="evidence" value="ECO:0007669"/>
    <property type="project" value="InterPro"/>
</dbReference>
<dbReference type="GO" id="GO:0005198">
    <property type="term" value="F:structural molecule activity"/>
    <property type="evidence" value="ECO:0000250"/>
    <property type="project" value="PomBase"/>
</dbReference>
<dbReference type="GO" id="GO:0015986">
    <property type="term" value="P:proton motive force-driven ATP synthesis"/>
    <property type="evidence" value="ECO:0000318"/>
    <property type="project" value="GO_Central"/>
</dbReference>
<dbReference type="GO" id="GO:0042776">
    <property type="term" value="P:proton motive force-driven mitochondrial ATP synthesis"/>
    <property type="evidence" value="ECO:0000250"/>
    <property type="project" value="PomBase"/>
</dbReference>
<dbReference type="Gene3D" id="6.10.280.70">
    <property type="match status" value="1"/>
</dbReference>
<dbReference type="InterPro" id="IPR008689">
    <property type="entry name" value="ATP_synth_F0_dsu_mt"/>
</dbReference>
<dbReference type="InterPro" id="IPR036228">
    <property type="entry name" value="ATP_synth_F0_dsu_sf_mt"/>
</dbReference>
<dbReference type="PANTHER" id="PTHR12700">
    <property type="entry name" value="ATP SYNTHASE SUBUNIT D, MITOCHONDRIAL"/>
    <property type="match status" value="1"/>
</dbReference>
<dbReference type="Pfam" id="PF05873">
    <property type="entry name" value="Mt_ATP-synt_D"/>
    <property type="match status" value="1"/>
</dbReference>
<dbReference type="PIRSF" id="PIRSF005514">
    <property type="entry name" value="ATPase_F0_D_mt"/>
    <property type="match status" value="1"/>
</dbReference>
<dbReference type="SUPFAM" id="SSF161065">
    <property type="entry name" value="ATP synthase D chain-like"/>
    <property type="match status" value="1"/>
</dbReference>
<protein>
    <recommendedName>
        <fullName>ATP synthase subunit d, mitochondrial</fullName>
    </recommendedName>
</protein>
<sequence>MSKVASAAGKAIDWASVASKLKLDAATASAIANFRSRHAQAVAKLGTLREQATTVDFATYRSVLANKEIVNRIESSMKSFKPVKIDLNSQLKAINAFEAKASEGAKKNVELVKAELQNLSATLKNIEQARPTEEITIEDMKQAVPEIEKIVETMVTKGKWVIPGYREKFGDLSIM</sequence>
<gene>
    <name type="primary">atp7</name>
    <name type="ORF">SPBC29A10.13</name>
</gene>
<feature type="initiator methionine" description="Removed" evidence="1">
    <location>
        <position position="1"/>
    </location>
</feature>
<feature type="chain" id="PRO_0000071680" description="ATP synthase subunit d, mitochondrial">
    <location>
        <begin position="2"/>
        <end position="175"/>
    </location>
</feature>
<feature type="modified residue" description="N-acetylserine" evidence="1">
    <location>
        <position position="2"/>
    </location>
</feature>
<comment type="function">
    <text evidence="1">Mitochondrial membrane ATP synthase (F(1)F(0) ATP synthase or Complex V) produces ATP from ADP in the presence of a proton gradient across the membrane which is generated by electron transport complexes of the respiratory chain. F-type ATPases consist of two structural domains, F(1) - containing the extramembraneous catalytic core, and F(0) - containing the membrane proton channel, linked together by a central stalk and a peripheral stalk. During catalysis, ATP synthesis in the catalytic domain of F(1) is coupled via a rotary mechanism of the central stalk subunits to proton translocation. Part of the complex F(0) domain and the peripheric stalk, which acts as a stator to hold the catalytic alpha(3)beta(3) subcomplex and subunit a/ATP6 static relative to the rotary elements (By similarity).</text>
</comment>
<comment type="subcellular location">
    <subcellularLocation>
        <location evidence="1">Mitochondrion inner membrane</location>
        <topology evidence="1">Peripheral membrane protein</topology>
    </subcellularLocation>
</comment>
<comment type="similarity">
    <text evidence="2">Belongs to the ATPase d subunit family.</text>
</comment>